<evidence type="ECO:0000255" key="1">
    <source>
        <dbReference type="HAMAP-Rule" id="MF_00175"/>
    </source>
</evidence>
<evidence type="ECO:0000255" key="2">
    <source>
        <dbReference type="PROSITE-ProRule" id="PRU01250"/>
    </source>
</evidence>
<comment type="function">
    <text evidence="1">ATP-dependent specificity component of the Clp protease. It directs the protease to specific substrates. Can perform chaperone functions in the absence of ClpP.</text>
</comment>
<comment type="subunit">
    <text evidence="1">Component of the ClpX-ClpP complex. Forms a hexameric ring that, in the presence of ATP, binds to fourteen ClpP subunits assembled into a disk-like structure with a central cavity, resembling the structure of eukaryotic proteasomes.</text>
</comment>
<comment type="similarity">
    <text evidence="1">Belongs to the ClpX chaperone family.</text>
</comment>
<name>CLPX_ECTM1</name>
<dbReference type="EMBL" id="CP000680">
    <property type="protein sequence ID" value="ABP84812.1"/>
    <property type="molecule type" value="Genomic_DNA"/>
</dbReference>
<dbReference type="SMR" id="A4XTZ6"/>
<dbReference type="STRING" id="399739.Pmen_2051"/>
<dbReference type="KEGG" id="pmy:Pmen_2051"/>
<dbReference type="PATRIC" id="fig|399739.8.peg.2080"/>
<dbReference type="eggNOG" id="COG1219">
    <property type="taxonomic scope" value="Bacteria"/>
</dbReference>
<dbReference type="HOGENOM" id="CLU_014218_8_2_6"/>
<dbReference type="OrthoDB" id="9804062at2"/>
<dbReference type="GO" id="GO:0009376">
    <property type="term" value="C:HslUV protease complex"/>
    <property type="evidence" value="ECO:0007669"/>
    <property type="project" value="TreeGrafter"/>
</dbReference>
<dbReference type="GO" id="GO:0005524">
    <property type="term" value="F:ATP binding"/>
    <property type="evidence" value="ECO:0007669"/>
    <property type="project" value="UniProtKB-UniRule"/>
</dbReference>
<dbReference type="GO" id="GO:0016887">
    <property type="term" value="F:ATP hydrolysis activity"/>
    <property type="evidence" value="ECO:0007669"/>
    <property type="project" value="InterPro"/>
</dbReference>
<dbReference type="GO" id="GO:0140662">
    <property type="term" value="F:ATP-dependent protein folding chaperone"/>
    <property type="evidence" value="ECO:0007669"/>
    <property type="project" value="InterPro"/>
</dbReference>
<dbReference type="GO" id="GO:0046983">
    <property type="term" value="F:protein dimerization activity"/>
    <property type="evidence" value="ECO:0007669"/>
    <property type="project" value="InterPro"/>
</dbReference>
<dbReference type="GO" id="GO:0051082">
    <property type="term" value="F:unfolded protein binding"/>
    <property type="evidence" value="ECO:0007669"/>
    <property type="project" value="UniProtKB-UniRule"/>
</dbReference>
<dbReference type="GO" id="GO:0008270">
    <property type="term" value="F:zinc ion binding"/>
    <property type="evidence" value="ECO:0007669"/>
    <property type="project" value="InterPro"/>
</dbReference>
<dbReference type="GO" id="GO:0051301">
    <property type="term" value="P:cell division"/>
    <property type="evidence" value="ECO:0007669"/>
    <property type="project" value="TreeGrafter"/>
</dbReference>
<dbReference type="GO" id="GO:0051603">
    <property type="term" value="P:proteolysis involved in protein catabolic process"/>
    <property type="evidence" value="ECO:0007669"/>
    <property type="project" value="TreeGrafter"/>
</dbReference>
<dbReference type="CDD" id="cd19497">
    <property type="entry name" value="RecA-like_ClpX"/>
    <property type="match status" value="1"/>
</dbReference>
<dbReference type="FunFam" id="1.10.8.60:FF:000002">
    <property type="entry name" value="ATP-dependent Clp protease ATP-binding subunit ClpX"/>
    <property type="match status" value="1"/>
</dbReference>
<dbReference type="FunFam" id="3.40.50.300:FF:000005">
    <property type="entry name" value="ATP-dependent Clp protease ATP-binding subunit ClpX"/>
    <property type="match status" value="1"/>
</dbReference>
<dbReference type="Gene3D" id="1.10.8.60">
    <property type="match status" value="1"/>
</dbReference>
<dbReference type="Gene3D" id="6.20.220.10">
    <property type="entry name" value="ClpX chaperone, C4-type zinc finger domain"/>
    <property type="match status" value="1"/>
</dbReference>
<dbReference type="Gene3D" id="3.40.50.300">
    <property type="entry name" value="P-loop containing nucleotide triphosphate hydrolases"/>
    <property type="match status" value="1"/>
</dbReference>
<dbReference type="HAMAP" id="MF_00175">
    <property type="entry name" value="ClpX"/>
    <property type="match status" value="1"/>
</dbReference>
<dbReference type="InterPro" id="IPR003593">
    <property type="entry name" value="AAA+_ATPase"/>
</dbReference>
<dbReference type="InterPro" id="IPR050052">
    <property type="entry name" value="ATP-dep_Clp_protease_ClpX"/>
</dbReference>
<dbReference type="InterPro" id="IPR003959">
    <property type="entry name" value="ATPase_AAA_core"/>
</dbReference>
<dbReference type="InterPro" id="IPR019489">
    <property type="entry name" value="Clp_ATPase_C"/>
</dbReference>
<dbReference type="InterPro" id="IPR004487">
    <property type="entry name" value="Clp_protease_ATP-bd_su_ClpX"/>
</dbReference>
<dbReference type="InterPro" id="IPR046425">
    <property type="entry name" value="ClpX_bact"/>
</dbReference>
<dbReference type="InterPro" id="IPR027417">
    <property type="entry name" value="P-loop_NTPase"/>
</dbReference>
<dbReference type="InterPro" id="IPR010603">
    <property type="entry name" value="Znf_CppX_C4"/>
</dbReference>
<dbReference type="InterPro" id="IPR038366">
    <property type="entry name" value="Znf_CppX_C4_sf"/>
</dbReference>
<dbReference type="NCBIfam" id="TIGR00382">
    <property type="entry name" value="clpX"/>
    <property type="match status" value="1"/>
</dbReference>
<dbReference type="NCBIfam" id="NF003745">
    <property type="entry name" value="PRK05342.1"/>
    <property type="match status" value="1"/>
</dbReference>
<dbReference type="PANTHER" id="PTHR48102:SF7">
    <property type="entry name" value="ATP-DEPENDENT CLP PROTEASE ATP-BINDING SUBUNIT CLPX-LIKE, MITOCHONDRIAL"/>
    <property type="match status" value="1"/>
</dbReference>
<dbReference type="PANTHER" id="PTHR48102">
    <property type="entry name" value="ATP-DEPENDENT CLP PROTEASE ATP-BINDING SUBUNIT CLPX-LIKE, MITOCHONDRIAL-RELATED"/>
    <property type="match status" value="1"/>
</dbReference>
<dbReference type="Pfam" id="PF07724">
    <property type="entry name" value="AAA_2"/>
    <property type="match status" value="1"/>
</dbReference>
<dbReference type="Pfam" id="PF10431">
    <property type="entry name" value="ClpB_D2-small"/>
    <property type="match status" value="1"/>
</dbReference>
<dbReference type="Pfam" id="PF06689">
    <property type="entry name" value="zf-C4_ClpX"/>
    <property type="match status" value="1"/>
</dbReference>
<dbReference type="SMART" id="SM00382">
    <property type="entry name" value="AAA"/>
    <property type="match status" value="1"/>
</dbReference>
<dbReference type="SMART" id="SM01086">
    <property type="entry name" value="ClpB_D2-small"/>
    <property type="match status" value="1"/>
</dbReference>
<dbReference type="SMART" id="SM00994">
    <property type="entry name" value="zf-C4_ClpX"/>
    <property type="match status" value="1"/>
</dbReference>
<dbReference type="SUPFAM" id="SSF57716">
    <property type="entry name" value="Glucocorticoid receptor-like (DNA-binding domain)"/>
    <property type="match status" value="1"/>
</dbReference>
<dbReference type="SUPFAM" id="SSF52540">
    <property type="entry name" value="P-loop containing nucleoside triphosphate hydrolases"/>
    <property type="match status" value="1"/>
</dbReference>
<dbReference type="PROSITE" id="PS51902">
    <property type="entry name" value="CLPX_ZB"/>
    <property type="match status" value="1"/>
</dbReference>
<reference key="1">
    <citation type="submission" date="2007-04" db="EMBL/GenBank/DDBJ databases">
        <title>Complete sequence of Pseudomonas mendocina ymp.</title>
        <authorList>
            <consortium name="US DOE Joint Genome Institute"/>
            <person name="Copeland A."/>
            <person name="Lucas S."/>
            <person name="Lapidus A."/>
            <person name="Barry K."/>
            <person name="Glavina del Rio T."/>
            <person name="Dalin E."/>
            <person name="Tice H."/>
            <person name="Pitluck S."/>
            <person name="Kiss H."/>
            <person name="Brettin T."/>
            <person name="Detter J.C."/>
            <person name="Bruce D."/>
            <person name="Han C."/>
            <person name="Schmutz J."/>
            <person name="Larimer F."/>
            <person name="Land M."/>
            <person name="Hauser L."/>
            <person name="Kyrpides N."/>
            <person name="Mikhailova N."/>
            <person name="Hersman L."/>
            <person name="Dubois J."/>
            <person name="Maurice P."/>
            <person name="Richardson P."/>
        </authorList>
    </citation>
    <scope>NUCLEOTIDE SEQUENCE [LARGE SCALE GENOMIC DNA]</scope>
    <source>
        <strain>ymp</strain>
    </source>
</reference>
<sequence length="426" mass="46727">MTDTRNGEDNGKLLYCSFCGKSQHEVRKLIAGPSVFICDECVDLCNDIIREEVQEAQAESSAHKLPAPKEISAILDQYVIGQERAKKVLSVAVYNHYKRLNQRDKKDDVELGKSNILLIGPTGSGKTLLAETLARLLNVPFTIADATTLTEAGYVGEDVENIIQKLLQKCDYDVEKAQMGIVYIDEIDKISRKSDNPSITRDVSGEGVQQALLKLIEGTVASVPPQGGRKHPQQEFLQVDTRNILFICGGAFAGLEKVIQARSTKGGIGFGAEVRSKQEGKKIGESLREVEPDDLVKFGLIPEFVGRLPVIATLEELDEAALVQILTEPKNALTKQYAKLFEMEGVDLEFRSDALKSVAQRALERKTGARGLRSILEGILLDTMYEIPSQQDVSKVVIDESVIDGSSKPLLIYENSEPQAKAAPDA</sequence>
<gene>
    <name evidence="1" type="primary">clpX</name>
    <name type="ordered locus">Pmen_2051</name>
</gene>
<protein>
    <recommendedName>
        <fullName evidence="1">ATP-dependent Clp protease ATP-binding subunit ClpX</fullName>
    </recommendedName>
</protein>
<proteinExistence type="inferred from homology"/>
<keyword id="KW-0067">ATP-binding</keyword>
<keyword id="KW-0143">Chaperone</keyword>
<keyword id="KW-0479">Metal-binding</keyword>
<keyword id="KW-0547">Nucleotide-binding</keyword>
<keyword id="KW-0862">Zinc</keyword>
<feature type="chain" id="PRO_1000024623" description="ATP-dependent Clp protease ATP-binding subunit ClpX">
    <location>
        <begin position="1"/>
        <end position="426"/>
    </location>
</feature>
<feature type="domain" description="ClpX-type ZB" evidence="2">
    <location>
        <begin position="4"/>
        <end position="57"/>
    </location>
</feature>
<feature type="binding site" evidence="2">
    <location>
        <position position="16"/>
    </location>
    <ligand>
        <name>Zn(2+)</name>
        <dbReference type="ChEBI" id="CHEBI:29105"/>
    </ligand>
</feature>
<feature type="binding site" evidence="2">
    <location>
        <position position="19"/>
    </location>
    <ligand>
        <name>Zn(2+)</name>
        <dbReference type="ChEBI" id="CHEBI:29105"/>
    </ligand>
</feature>
<feature type="binding site" evidence="2">
    <location>
        <position position="38"/>
    </location>
    <ligand>
        <name>Zn(2+)</name>
        <dbReference type="ChEBI" id="CHEBI:29105"/>
    </ligand>
</feature>
<feature type="binding site" evidence="2">
    <location>
        <position position="41"/>
    </location>
    <ligand>
        <name>Zn(2+)</name>
        <dbReference type="ChEBI" id="CHEBI:29105"/>
    </ligand>
</feature>
<feature type="binding site" evidence="1">
    <location>
        <begin position="121"/>
        <end position="128"/>
    </location>
    <ligand>
        <name>ATP</name>
        <dbReference type="ChEBI" id="CHEBI:30616"/>
    </ligand>
</feature>
<organism>
    <name type="scientific">Ectopseudomonas mendocina (strain ymp)</name>
    <name type="common">Pseudomonas mendocina</name>
    <dbReference type="NCBI Taxonomy" id="399739"/>
    <lineage>
        <taxon>Bacteria</taxon>
        <taxon>Pseudomonadati</taxon>
        <taxon>Pseudomonadota</taxon>
        <taxon>Gammaproteobacteria</taxon>
        <taxon>Pseudomonadales</taxon>
        <taxon>Pseudomonadaceae</taxon>
        <taxon>Ectopseudomonas</taxon>
    </lineage>
</organism>
<accession>A4XTZ6</accession>